<name>LEPA_RICTY</name>
<gene>
    <name evidence="1" type="primary">lepA</name>
    <name type="ordered locus">RT0266</name>
</gene>
<feature type="chain" id="PRO_0000176335" description="Elongation factor 4">
    <location>
        <begin position="1"/>
        <end position="600"/>
    </location>
</feature>
<feature type="domain" description="tr-type G">
    <location>
        <begin position="5"/>
        <end position="187"/>
    </location>
</feature>
<feature type="binding site" evidence="1">
    <location>
        <begin position="17"/>
        <end position="22"/>
    </location>
    <ligand>
        <name>GTP</name>
        <dbReference type="ChEBI" id="CHEBI:37565"/>
    </ligand>
</feature>
<feature type="binding site" evidence="1">
    <location>
        <begin position="134"/>
        <end position="137"/>
    </location>
    <ligand>
        <name>GTP</name>
        <dbReference type="ChEBI" id="CHEBI:37565"/>
    </ligand>
</feature>
<organism>
    <name type="scientific">Rickettsia typhi (strain ATCC VR-144 / Wilmington)</name>
    <dbReference type="NCBI Taxonomy" id="257363"/>
    <lineage>
        <taxon>Bacteria</taxon>
        <taxon>Pseudomonadati</taxon>
        <taxon>Pseudomonadota</taxon>
        <taxon>Alphaproteobacteria</taxon>
        <taxon>Rickettsiales</taxon>
        <taxon>Rickettsiaceae</taxon>
        <taxon>Rickettsieae</taxon>
        <taxon>Rickettsia</taxon>
        <taxon>typhus group</taxon>
    </lineage>
</organism>
<comment type="function">
    <text evidence="1">Required for accurate and efficient protein synthesis under certain stress conditions. May act as a fidelity factor of the translation reaction, by catalyzing a one-codon backward translocation of tRNAs on improperly translocated ribosomes. Back-translocation proceeds from a post-translocation (POST) complex to a pre-translocation (PRE) complex, thus giving elongation factor G a second chance to translocate the tRNAs correctly. Binds to ribosomes in a GTP-dependent manner.</text>
</comment>
<comment type="catalytic activity">
    <reaction evidence="1">
        <text>GTP + H2O = GDP + phosphate + H(+)</text>
        <dbReference type="Rhea" id="RHEA:19669"/>
        <dbReference type="ChEBI" id="CHEBI:15377"/>
        <dbReference type="ChEBI" id="CHEBI:15378"/>
        <dbReference type="ChEBI" id="CHEBI:37565"/>
        <dbReference type="ChEBI" id="CHEBI:43474"/>
        <dbReference type="ChEBI" id="CHEBI:58189"/>
        <dbReference type="EC" id="3.6.5.n1"/>
    </reaction>
</comment>
<comment type="subcellular location">
    <subcellularLocation>
        <location evidence="1">Cell inner membrane</location>
        <topology evidence="1">Peripheral membrane protein</topology>
        <orientation evidence="1">Cytoplasmic side</orientation>
    </subcellularLocation>
</comment>
<comment type="similarity">
    <text evidence="1">Belongs to the TRAFAC class translation factor GTPase superfamily. Classic translation factor GTPase family. LepA subfamily.</text>
</comment>
<sequence length="600" mass="67101">MNNQKYIRNFSIIAHIDHGKSTLADRLIEHCGGLNAREMSQQVLDSMDIEKERGITIKAQTVRLVYKAKNGNTYYLNLMDTPGHVDFSYEVSRSLAACEGSLLVVDSTQGVEAQTLANVYQAIANDHEIVPVLNKIDLAASEPEHVKKQIEDIIGIDASEAVLISAKNGIGIDSVLEAIINKLPSPKESSTDTLKALLVDSWYDPYLGVVILVRIIDGTLRKNMRVKMIGTNSVYTVEHVGFFTPKKHISDVLYAGEIGFFTASIKRVSDCKVGDTITDEKKSCEQALPGFKPNIPVVFCGFYPTDSAEFEHLKDSLAKLRLNDASFEYEMESSSALGVGFRCGFLGLLHLEIIQERLSREFNLDLITTAPSVIYKIYMLDGESLEIHNPADLPDLQKIASMEEPWIKATIMVPDEFIGTVLSLCKEKRGIQLDHSYISNRAKIVYKLPLNEIVYDFYDRLKSCSKGYASFEWQMDVYELSDLVNLRILVNGEVVDALSTIVHRSRAEQRGRALCVRLKDLIPRQQIDIAIQASVGNRIIARETIKALRKDVLSKCYGGDISRKRKLLEKQKAGKKKMRQYGNIEIPQSAFIAALQIGGE</sequence>
<accession>Q68X95</accession>
<reference key="1">
    <citation type="journal article" date="2004" name="J. Bacteriol.">
        <title>Complete genome sequence of Rickettsia typhi and comparison with sequences of other Rickettsiae.</title>
        <authorList>
            <person name="McLeod M.P."/>
            <person name="Qin X."/>
            <person name="Karpathy S.E."/>
            <person name="Gioia J."/>
            <person name="Highlander S.K."/>
            <person name="Fox G.E."/>
            <person name="McNeill T.Z."/>
            <person name="Jiang H."/>
            <person name="Muzny D."/>
            <person name="Jacob L.S."/>
            <person name="Hawes A.C."/>
            <person name="Sodergren E."/>
            <person name="Gill R."/>
            <person name="Hume J."/>
            <person name="Morgan M."/>
            <person name="Fan G."/>
            <person name="Amin A.G."/>
            <person name="Gibbs R.A."/>
            <person name="Hong C."/>
            <person name="Yu X.-J."/>
            <person name="Walker D.H."/>
            <person name="Weinstock G.M."/>
        </authorList>
    </citation>
    <scope>NUCLEOTIDE SEQUENCE [LARGE SCALE GENOMIC DNA]</scope>
    <source>
        <strain>ATCC VR-144 / Wilmington</strain>
    </source>
</reference>
<dbReference type="EC" id="3.6.5.n1" evidence="1"/>
<dbReference type="EMBL" id="AE017197">
    <property type="protein sequence ID" value="AAU03747.1"/>
    <property type="molecule type" value="Genomic_DNA"/>
</dbReference>
<dbReference type="RefSeq" id="WP_011190732.1">
    <property type="nucleotide sequence ID" value="NC_006142.1"/>
</dbReference>
<dbReference type="SMR" id="Q68X95"/>
<dbReference type="KEGG" id="rty:RT0266"/>
<dbReference type="eggNOG" id="COG0481">
    <property type="taxonomic scope" value="Bacteria"/>
</dbReference>
<dbReference type="HOGENOM" id="CLU_009995_3_3_5"/>
<dbReference type="OrthoDB" id="9802948at2"/>
<dbReference type="Proteomes" id="UP000000604">
    <property type="component" value="Chromosome"/>
</dbReference>
<dbReference type="GO" id="GO:0005886">
    <property type="term" value="C:plasma membrane"/>
    <property type="evidence" value="ECO:0007669"/>
    <property type="project" value="UniProtKB-SubCell"/>
</dbReference>
<dbReference type="GO" id="GO:0005525">
    <property type="term" value="F:GTP binding"/>
    <property type="evidence" value="ECO:0007669"/>
    <property type="project" value="UniProtKB-UniRule"/>
</dbReference>
<dbReference type="GO" id="GO:0003924">
    <property type="term" value="F:GTPase activity"/>
    <property type="evidence" value="ECO:0007669"/>
    <property type="project" value="UniProtKB-UniRule"/>
</dbReference>
<dbReference type="GO" id="GO:0097216">
    <property type="term" value="F:guanosine tetraphosphate binding"/>
    <property type="evidence" value="ECO:0007669"/>
    <property type="project" value="UniProtKB-ARBA"/>
</dbReference>
<dbReference type="GO" id="GO:0043022">
    <property type="term" value="F:ribosome binding"/>
    <property type="evidence" value="ECO:0007669"/>
    <property type="project" value="UniProtKB-UniRule"/>
</dbReference>
<dbReference type="GO" id="GO:0003746">
    <property type="term" value="F:translation elongation factor activity"/>
    <property type="evidence" value="ECO:0007669"/>
    <property type="project" value="UniProtKB-UniRule"/>
</dbReference>
<dbReference type="GO" id="GO:0045727">
    <property type="term" value="P:positive regulation of translation"/>
    <property type="evidence" value="ECO:0007669"/>
    <property type="project" value="UniProtKB-UniRule"/>
</dbReference>
<dbReference type="CDD" id="cd03699">
    <property type="entry name" value="EF4_II"/>
    <property type="match status" value="1"/>
</dbReference>
<dbReference type="CDD" id="cd16260">
    <property type="entry name" value="EF4_III"/>
    <property type="match status" value="1"/>
</dbReference>
<dbReference type="CDD" id="cd01890">
    <property type="entry name" value="LepA"/>
    <property type="match status" value="1"/>
</dbReference>
<dbReference type="CDD" id="cd03709">
    <property type="entry name" value="lepA_C"/>
    <property type="match status" value="1"/>
</dbReference>
<dbReference type="FunFam" id="3.40.50.300:FF:000078">
    <property type="entry name" value="Elongation factor 4"/>
    <property type="match status" value="1"/>
</dbReference>
<dbReference type="FunFam" id="2.40.30.10:FF:000015">
    <property type="entry name" value="Translation factor GUF1, mitochondrial"/>
    <property type="match status" value="1"/>
</dbReference>
<dbReference type="FunFam" id="3.30.70.240:FF:000007">
    <property type="entry name" value="Translation factor GUF1, mitochondrial"/>
    <property type="match status" value="1"/>
</dbReference>
<dbReference type="FunFam" id="3.30.70.2570:FF:000001">
    <property type="entry name" value="Translation factor GUF1, mitochondrial"/>
    <property type="match status" value="1"/>
</dbReference>
<dbReference type="FunFam" id="3.30.70.870:FF:000004">
    <property type="entry name" value="Translation factor GUF1, mitochondrial"/>
    <property type="match status" value="1"/>
</dbReference>
<dbReference type="Gene3D" id="3.30.70.240">
    <property type="match status" value="1"/>
</dbReference>
<dbReference type="Gene3D" id="3.30.70.2570">
    <property type="entry name" value="Elongation factor 4, C-terminal domain"/>
    <property type="match status" value="1"/>
</dbReference>
<dbReference type="Gene3D" id="3.30.70.870">
    <property type="entry name" value="Elongation Factor G (Translational Gtpase), domain 3"/>
    <property type="match status" value="1"/>
</dbReference>
<dbReference type="Gene3D" id="3.40.50.300">
    <property type="entry name" value="P-loop containing nucleotide triphosphate hydrolases"/>
    <property type="match status" value="1"/>
</dbReference>
<dbReference type="Gene3D" id="2.40.30.10">
    <property type="entry name" value="Translation factors"/>
    <property type="match status" value="1"/>
</dbReference>
<dbReference type="HAMAP" id="MF_00071">
    <property type="entry name" value="LepA"/>
    <property type="match status" value="1"/>
</dbReference>
<dbReference type="InterPro" id="IPR006297">
    <property type="entry name" value="EF-4"/>
</dbReference>
<dbReference type="InterPro" id="IPR035647">
    <property type="entry name" value="EFG_III/V"/>
</dbReference>
<dbReference type="InterPro" id="IPR000640">
    <property type="entry name" value="EFG_V-like"/>
</dbReference>
<dbReference type="InterPro" id="IPR004161">
    <property type="entry name" value="EFTu-like_2"/>
</dbReference>
<dbReference type="InterPro" id="IPR031157">
    <property type="entry name" value="G_TR_CS"/>
</dbReference>
<dbReference type="InterPro" id="IPR038363">
    <property type="entry name" value="LepA_C_sf"/>
</dbReference>
<dbReference type="InterPro" id="IPR013842">
    <property type="entry name" value="LepA_CTD"/>
</dbReference>
<dbReference type="InterPro" id="IPR035654">
    <property type="entry name" value="LepA_IV"/>
</dbReference>
<dbReference type="InterPro" id="IPR027417">
    <property type="entry name" value="P-loop_NTPase"/>
</dbReference>
<dbReference type="InterPro" id="IPR005225">
    <property type="entry name" value="Small_GTP-bd"/>
</dbReference>
<dbReference type="InterPro" id="IPR000795">
    <property type="entry name" value="T_Tr_GTP-bd_dom"/>
</dbReference>
<dbReference type="NCBIfam" id="TIGR01393">
    <property type="entry name" value="lepA"/>
    <property type="match status" value="1"/>
</dbReference>
<dbReference type="NCBIfam" id="TIGR00231">
    <property type="entry name" value="small_GTP"/>
    <property type="match status" value="1"/>
</dbReference>
<dbReference type="PANTHER" id="PTHR43512:SF4">
    <property type="entry name" value="TRANSLATION FACTOR GUF1 HOMOLOG, CHLOROPLASTIC"/>
    <property type="match status" value="1"/>
</dbReference>
<dbReference type="PANTHER" id="PTHR43512">
    <property type="entry name" value="TRANSLATION FACTOR GUF1-RELATED"/>
    <property type="match status" value="1"/>
</dbReference>
<dbReference type="Pfam" id="PF00679">
    <property type="entry name" value="EFG_C"/>
    <property type="match status" value="1"/>
</dbReference>
<dbReference type="Pfam" id="PF00009">
    <property type="entry name" value="GTP_EFTU"/>
    <property type="match status" value="1"/>
</dbReference>
<dbReference type="Pfam" id="PF03144">
    <property type="entry name" value="GTP_EFTU_D2"/>
    <property type="match status" value="1"/>
</dbReference>
<dbReference type="Pfam" id="PF06421">
    <property type="entry name" value="LepA_C"/>
    <property type="match status" value="1"/>
</dbReference>
<dbReference type="PRINTS" id="PR00315">
    <property type="entry name" value="ELONGATNFCT"/>
</dbReference>
<dbReference type="SUPFAM" id="SSF54980">
    <property type="entry name" value="EF-G C-terminal domain-like"/>
    <property type="match status" value="2"/>
</dbReference>
<dbReference type="SUPFAM" id="SSF52540">
    <property type="entry name" value="P-loop containing nucleoside triphosphate hydrolases"/>
    <property type="match status" value="1"/>
</dbReference>
<dbReference type="PROSITE" id="PS00301">
    <property type="entry name" value="G_TR_1"/>
    <property type="match status" value="1"/>
</dbReference>
<dbReference type="PROSITE" id="PS51722">
    <property type="entry name" value="G_TR_2"/>
    <property type="match status" value="1"/>
</dbReference>
<proteinExistence type="inferred from homology"/>
<evidence type="ECO:0000255" key="1">
    <source>
        <dbReference type="HAMAP-Rule" id="MF_00071"/>
    </source>
</evidence>
<keyword id="KW-0997">Cell inner membrane</keyword>
<keyword id="KW-1003">Cell membrane</keyword>
<keyword id="KW-0342">GTP-binding</keyword>
<keyword id="KW-0378">Hydrolase</keyword>
<keyword id="KW-0472">Membrane</keyword>
<keyword id="KW-0547">Nucleotide-binding</keyword>
<keyword id="KW-0648">Protein biosynthesis</keyword>
<protein>
    <recommendedName>
        <fullName evidence="1">Elongation factor 4</fullName>
        <shortName evidence="1">EF-4</shortName>
        <ecNumber evidence="1">3.6.5.n1</ecNumber>
    </recommendedName>
    <alternativeName>
        <fullName evidence="1">Ribosomal back-translocase LepA</fullName>
    </alternativeName>
</protein>